<protein>
    <recommendedName>
        <fullName evidence="1">Sulfur carrier protein FdhD</fullName>
    </recommendedName>
</protein>
<feature type="chain" id="PRO_1000077438" description="Sulfur carrier protein FdhD">
    <location>
        <begin position="1"/>
        <end position="265"/>
    </location>
</feature>
<feature type="active site" description="Cysteine persulfide intermediate" evidence="1">
    <location>
        <position position="107"/>
    </location>
</feature>
<sequence>MNKDVSLGQPIVRYEDGKLFNTTDQYVTEFPLTIMVNGEEFATVICSPTNLEELVIGFLASEGAILKRDELKSVLIDDSKGFAHVELNKDLGDRFQYSTKRMIASCCGKSREFYFQNDAAIAKTSMSKITLTPIQIINMMTRLQSASHIYQETGGLHNAAISDGLTFFVHRQDIGRHNALDKLYGFCIQRHITVRDKVLIFSGRISSEILIKAAKIGVGVILSKSAPTTLAVTLANDLNITAVGFIRNGGFNIYSHPERIIDSEQ</sequence>
<accession>A5IV62</accession>
<evidence type="ECO:0000255" key="1">
    <source>
        <dbReference type="HAMAP-Rule" id="MF_00187"/>
    </source>
</evidence>
<name>FDHD_STAA9</name>
<organism>
    <name type="scientific">Staphylococcus aureus (strain JH9)</name>
    <dbReference type="NCBI Taxonomy" id="359786"/>
    <lineage>
        <taxon>Bacteria</taxon>
        <taxon>Bacillati</taxon>
        <taxon>Bacillota</taxon>
        <taxon>Bacilli</taxon>
        <taxon>Bacillales</taxon>
        <taxon>Staphylococcaceae</taxon>
        <taxon>Staphylococcus</taxon>
    </lineage>
</organism>
<comment type="function">
    <text evidence="1">Required for formate dehydrogenase (FDH) activity. Acts as a sulfur carrier protein that transfers sulfur from IscS to the molybdenum cofactor prior to its insertion into FDH.</text>
</comment>
<comment type="subcellular location">
    <subcellularLocation>
        <location evidence="1">Cytoplasm</location>
    </subcellularLocation>
</comment>
<comment type="similarity">
    <text evidence="1">Belongs to the FdhD family.</text>
</comment>
<gene>
    <name evidence="1" type="primary">fdhD</name>
    <name type="ordered locus">SaurJH9_2305</name>
</gene>
<proteinExistence type="inferred from homology"/>
<reference key="1">
    <citation type="submission" date="2007-05" db="EMBL/GenBank/DDBJ databases">
        <title>Complete sequence of chromosome of Staphylococcus aureus subsp. aureus JH9.</title>
        <authorList>
            <consortium name="US DOE Joint Genome Institute"/>
            <person name="Copeland A."/>
            <person name="Lucas S."/>
            <person name="Lapidus A."/>
            <person name="Barry K."/>
            <person name="Detter J.C."/>
            <person name="Glavina del Rio T."/>
            <person name="Hammon N."/>
            <person name="Israni S."/>
            <person name="Pitluck S."/>
            <person name="Chain P."/>
            <person name="Malfatti S."/>
            <person name="Shin M."/>
            <person name="Vergez L."/>
            <person name="Schmutz J."/>
            <person name="Larimer F."/>
            <person name="Land M."/>
            <person name="Hauser L."/>
            <person name="Kyrpides N."/>
            <person name="Kim E."/>
            <person name="Tomasz A."/>
            <person name="Richardson P."/>
        </authorList>
    </citation>
    <scope>NUCLEOTIDE SEQUENCE [LARGE SCALE GENOMIC DNA]</scope>
    <source>
        <strain>JH9</strain>
    </source>
</reference>
<dbReference type="EMBL" id="CP000703">
    <property type="protein sequence ID" value="ABQ50085.1"/>
    <property type="molecule type" value="Genomic_DNA"/>
</dbReference>
<dbReference type="RefSeq" id="WP_001030823.1">
    <property type="nucleotide sequence ID" value="NC_009487.1"/>
</dbReference>
<dbReference type="SMR" id="A5IV62"/>
<dbReference type="KEGG" id="saj:SaurJH9_2305"/>
<dbReference type="HOGENOM" id="CLU_056887_4_1_9"/>
<dbReference type="GO" id="GO:0005737">
    <property type="term" value="C:cytoplasm"/>
    <property type="evidence" value="ECO:0007669"/>
    <property type="project" value="UniProtKB-SubCell"/>
</dbReference>
<dbReference type="GO" id="GO:0097163">
    <property type="term" value="F:sulfur carrier activity"/>
    <property type="evidence" value="ECO:0007669"/>
    <property type="project" value="UniProtKB-UniRule"/>
</dbReference>
<dbReference type="GO" id="GO:0016783">
    <property type="term" value="F:sulfurtransferase activity"/>
    <property type="evidence" value="ECO:0007669"/>
    <property type="project" value="InterPro"/>
</dbReference>
<dbReference type="GO" id="GO:0006777">
    <property type="term" value="P:Mo-molybdopterin cofactor biosynthetic process"/>
    <property type="evidence" value="ECO:0007669"/>
    <property type="project" value="UniProtKB-UniRule"/>
</dbReference>
<dbReference type="Gene3D" id="3.10.20.10">
    <property type="match status" value="1"/>
</dbReference>
<dbReference type="Gene3D" id="3.40.140.10">
    <property type="entry name" value="Cytidine Deaminase, domain 2"/>
    <property type="match status" value="1"/>
</dbReference>
<dbReference type="HAMAP" id="MF_00187">
    <property type="entry name" value="FdhD"/>
    <property type="match status" value="1"/>
</dbReference>
<dbReference type="InterPro" id="IPR016193">
    <property type="entry name" value="Cytidine_deaminase-like"/>
</dbReference>
<dbReference type="InterPro" id="IPR003786">
    <property type="entry name" value="FdhD"/>
</dbReference>
<dbReference type="NCBIfam" id="TIGR00129">
    <property type="entry name" value="fdhD_narQ"/>
    <property type="match status" value="1"/>
</dbReference>
<dbReference type="PANTHER" id="PTHR30592">
    <property type="entry name" value="FORMATE DEHYDROGENASE"/>
    <property type="match status" value="1"/>
</dbReference>
<dbReference type="PANTHER" id="PTHR30592:SF1">
    <property type="entry name" value="SULFUR CARRIER PROTEIN FDHD"/>
    <property type="match status" value="1"/>
</dbReference>
<dbReference type="Pfam" id="PF02634">
    <property type="entry name" value="FdhD-NarQ"/>
    <property type="match status" value="1"/>
</dbReference>
<dbReference type="PIRSF" id="PIRSF015626">
    <property type="entry name" value="FdhD"/>
    <property type="match status" value="1"/>
</dbReference>
<dbReference type="SUPFAM" id="SSF53927">
    <property type="entry name" value="Cytidine deaminase-like"/>
    <property type="match status" value="1"/>
</dbReference>
<keyword id="KW-0963">Cytoplasm</keyword>
<keyword id="KW-0501">Molybdenum cofactor biosynthesis</keyword>